<organism>
    <name type="scientific">Staphylococcus saprophyticus subsp. saprophyticus (strain ATCC 15305 / DSM 20229 / NCIMB 8711 / NCTC 7292 / S-41)</name>
    <dbReference type="NCBI Taxonomy" id="342451"/>
    <lineage>
        <taxon>Bacteria</taxon>
        <taxon>Bacillati</taxon>
        <taxon>Bacillota</taxon>
        <taxon>Bacilli</taxon>
        <taxon>Bacillales</taxon>
        <taxon>Staphylococcaceae</taxon>
        <taxon>Staphylococcus</taxon>
    </lineage>
</organism>
<dbReference type="EC" id="6.3.4.4" evidence="1"/>
<dbReference type="EMBL" id="AP008934">
    <property type="protein sequence ID" value="BAE17162.1"/>
    <property type="molecule type" value="Genomic_DNA"/>
</dbReference>
<dbReference type="RefSeq" id="WP_011302022.1">
    <property type="nucleotide sequence ID" value="NC_007350.1"/>
</dbReference>
<dbReference type="SMR" id="Q4A164"/>
<dbReference type="GeneID" id="3615243"/>
<dbReference type="KEGG" id="ssp:SSP0017"/>
<dbReference type="PATRIC" id="fig|342451.11.peg.18"/>
<dbReference type="eggNOG" id="COG0104">
    <property type="taxonomic scope" value="Bacteria"/>
</dbReference>
<dbReference type="HOGENOM" id="CLU_029848_0_0_9"/>
<dbReference type="OrthoDB" id="9807553at2"/>
<dbReference type="UniPathway" id="UPA00075">
    <property type="reaction ID" value="UER00335"/>
</dbReference>
<dbReference type="Proteomes" id="UP000006371">
    <property type="component" value="Chromosome"/>
</dbReference>
<dbReference type="GO" id="GO:0005737">
    <property type="term" value="C:cytoplasm"/>
    <property type="evidence" value="ECO:0007669"/>
    <property type="project" value="UniProtKB-SubCell"/>
</dbReference>
<dbReference type="GO" id="GO:0004019">
    <property type="term" value="F:adenylosuccinate synthase activity"/>
    <property type="evidence" value="ECO:0007669"/>
    <property type="project" value="UniProtKB-UniRule"/>
</dbReference>
<dbReference type="GO" id="GO:0005525">
    <property type="term" value="F:GTP binding"/>
    <property type="evidence" value="ECO:0007669"/>
    <property type="project" value="UniProtKB-UniRule"/>
</dbReference>
<dbReference type="GO" id="GO:0000287">
    <property type="term" value="F:magnesium ion binding"/>
    <property type="evidence" value="ECO:0007669"/>
    <property type="project" value="UniProtKB-UniRule"/>
</dbReference>
<dbReference type="GO" id="GO:0044208">
    <property type="term" value="P:'de novo' AMP biosynthetic process"/>
    <property type="evidence" value="ECO:0007669"/>
    <property type="project" value="UniProtKB-UniRule"/>
</dbReference>
<dbReference type="GO" id="GO:0046040">
    <property type="term" value="P:IMP metabolic process"/>
    <property type="evidence" value="ECO:0007669"/>
    <property type="project" value="TreeGrafter"/>
</dbReference>
<dbReference type="CDD" id="cd03108">
    <property type="entry name" value="AdSS"/>
    <property type="match status" value="1"/>
</dbReference>
<dbReference type="FunFam" id="1.10.300.10:FF:000001">
    <property type="entry name" value="Adenylosuccinate synthetase"/>
    <property type="match status" value="1"/>
</dbReference>
<dbReference type="FunFam" id="3.90.170.10:FF:000001">
    <property type="entry name" value="Adenylosuccinate synthetase"/>
    <property type="match status" value="1"/>
</dbReference>
<dbReference type="Gene3D" id="3.40.440.10">
    <property type="entry name" value="Adenylosuccinate Synthetase, subunit A, domain 1"/>
    <property type="match status" value="1"/>
</dbReference>
<dbReference type="Gene3D" id="1.10.300.10">
    <property type="entry name" value="Adenylosuccinate Synthetase, subunit A, domain 2"/>
    <property type="match status" value="1"/>
</dbReference>
<dbReference type="Gene3D" id="3.90.170.10">
    <property type="entry name" value="Adenylosuccinate Synthetase, subunit A, domain 3"/>
    <property type="match status" value="1"/>
</dbReference>
<dbReference type="HAMAP" id="MF_00011">
    <property type="entry name" value="Adenylosucc_synth"/>
    <property type="match status" value="1"/>
</dbReference>
<dbReference type="InterPro" id="IPR018220">
    <property type="entry name" value="Adenylosuccin_syn_GTP-bd"/>
</dbReference>
<dbReference type="InterPro" id="IPR033128">
    <property type="entry name" value="Adenylosuccin_syn_Lys_AS"/>
</dbReference>
<dbReference type="InterPro" id="IPR042109">
    <property type="entry name" value="Adenylosuccinate_synth_dom1"/>
</dbReference>
<dbReference type="InterPro" id="IPR042110">
    <property type="entry name" value="Adenylosuccinate_synth_dom2"/>
</dbReference>
<dbReference type="InterPro" id="IPR042111">
    <property type="entry name" value="Adenylosuccinate_synth_dom3"/>
</dbReference>
<dbReference type="InterPro" id="IPR001114">
    <property type="entry name" value="Adenylosuccinate_synthetase"/>
</dbReference>
<dbReference type="InterPro" id="IPR027417">
    <property type="entry name" value="P-loop_NTPase"/>
</dbReference>
<dbReference type="NCBIfam" id="NF002223">
    <property type="entry name" value="PRK01117.1"/>
    <property type="match status" value="1"/>
</dbReference>
<dbReference type="NCBIfam" id="TIGR00184">
    <property type="entry name" value="purA"/>
    <property type="match status" value="1"/>
</dbReference>
<dbReference type="PANTHER" id="PTHR11846">
    <property type="entry name" value="ADENYLOSUCCINATE SYNTHETASE"/>
    <property type="match status" value="1"/>
</dbReference>
<dbReference type="PANTHER" id="PTHR11846:SF0">
    <property type="entry name" value="ADENYLOSUCCINATE SYNTHETASE"/>
    <property type="match status" value="1"/>
</dbReference>
<dbReference type="Pfam" id="PF00709">
    <property type="entry name" value="Adenylsucc_synt"/>
    <property type="match status" value="1"/>
</dbReference>
<dbReference type="SMART" id="SM00788">
    <property type="entry name" value="Adenylsucc_synt"/>
    <property type="match status" value="1"/>
</dbReference>
<dbReference type="SUPFAM" id="SSF52540">
    <property type="entry name" value="P-loop containing nucleoside triphosphate hydrolases"/>
    <property type="match status" value="1"/>
</dbReference>
<dbReference type="PROSITE" id="PS01266">
    <property type="entry name" value="ADENYLOSUCCIN_SYN_1"/>
    <property type="match status" value="1"/>
</dbReference>
<dbReference type="PROSITE" id="PS00513">
    <property type="entry name" value="ADENYLOSUCCIN_SYN_2"/>
    <property type="match status" value="1"/>
</dbReference>
<accession>Q4A164</accession>
<sequence length="427" mass="47192">MSSIVVVGTQWGDEGKGKITDFLAEQADVIARFSGGNNAGHTIKFGGETYKLHLVPSGIFYKEKLAVIGNGVVVDPVALLKELDALNERGISTDNLRISNRAQVILPYHIKQDEYEEERRGDNKIGTTKKGIGPAYVDKAQRIGIRVADLLDKETFEKLLKDNIEYKGAYFEGMFGKACPTFEEIFETYYAAGQRLAQFVTDTAKVLDDAFVADEKVLFEGAQGVMLDIDHGTYPFVTSSNPVAGNVTVGGGVGPTFVSKVIGVCKAYTSRVGDGPFPTELFDEDGHHIREVGREYGTTTGRPRRVGWFDSVVLRHSRRASGITDLSINSIDVLTGLKEVKICTAYELDGKEITEYPANLKDLQRCKPIFETLPGWTEDVTGCRSLEELPNNARRYLERISELCDVKISIFSVGPDRNQTNLLKSLW</sequence>
<evidence type="ECO:0000255" key="1">
    <source>
        <dbReference type="HAMAP-Rule" id="MF_00011"/>
    </source>
</evidence>
<comment type="function">
    <text evidence="1">Plays an important role in the de novo pathway of purine nucleotide biosynthesis. Catalyzes the first committed step in the biosynthesis of AMP from IMP.</text>
</comment>
<comment type="catalytic activity">
    <reaction evidence="1">
        <text>IMP + L-aspartate + GTP = N(6)-(1,2-dicarboxyethyl)-AMP + GDP + phosphate + 2 H(+)</text>
        <dbReference type="Rhea" id="RHEA:15753"/>
        <dbReference type="ChEBI" id="CHEBI:15378"/>
        <dbReference type="ChEBI" id="CHEBI:29991"/>
        <dbReference type="ChEBI" id="CHEBI:37565"/>
        <dbReference type="ChEBI" id="CHEBI:43474"/>
        <dbReference type="ChEBI" id="CHEBI:57567"/>
        <dbReference type="ChEBI" id="CHEBI:58053"/>
        <dbReference type="ChEBI" id="CHEBI:58189"/>
        <dbReference type="EC" id="6.3.4.4"/>
    </reaction>
</comment>
<comment type="cofactor">
    <cofactor evidence="1">
        <name>Mg(2+)</name>
        <dbReference type="ChEBI" id="CHEBI:18420"/>
    </cofactor>
    <text evidence="1">Binds 1 Mg(2+) ion per subunit.</text>
</comment>
<comment type="pathway">
    <text evidence="1">Purine metabolism; AMP biosynthesis via de novo pathway; AMP from IMP: step 1/2.</text>
</comment>
<comment type="subunit">
    <text evidence="1">Homodimer.</text>
</comment>
<comment type="subcellular location">
    <subcellularLocation>
        <location evidence="1">Cytoplasm</location>
    </subcellularLocation>
</comment>
<comment type="similarity">
    <text evidence="1">Belongs to the adenylosuccinate synthetase family.</text>
</comment>
<keyword id="KW-0963">Cytoplasm</keyword>
<keyword id="KW-0342">GTP-binding</keyword>
<keyword id="KW-0436">Ligase</keyword>
<keyword id="KW-0460">Magnesium</keyword>
<keyword id="KW-0479">Metal-binding</keyword>
<keyword id="KW-0547">Nucleotide-binding</keyword>
<keyword id="KW-0658">Purine biosynthesis</keyword>
<keyword id="KW-1185">Reference proteome</keyword>
<reference key="1">
    <citation type="journal article" date="2005" name="Proc. Natl. Acad. Sci. U.S.A.">
        <title>Whole genome sequence of Staphylococcus saprophyticus reveals the pathogenesis of uncomplicated urinary tract infection.</title>
        <authorList>
            <person name="Kuroda M."/>
            <person name="Yamashita A."/>
            <person name="Hirakawa H."/>
            <person name="Kumano M."/>
            <person name="Morikawa K."/>
            <person name="Higashide M."/>
            <person name="Maruyama A."/>
            <person name="Inose Y."/>
            <person name="Matoba K."/>
            <person name="Toh H."/>
            <person name="Kuhara S."/>
            <person name="Hattori M."/>
            <person name="Ohta T."/>
        </authorList>
    </citation>
    <scope>NUCLEOTIDE SEQUENCE [LARGE SCALE GENOMIC DNA]</scope>
    <source>
        <strain>ATCC 15305 / DSM 20229 / NCIMB 8711 / NCTC 7292 / S-41</strain>
    </source>
</reference>
<protein>
    <recommendedName>
        <fullName evidence="1">Adenylosuccinate synthetase</fullName>
        <shortName evidence="1">AMPSase</shortName>
        <shortName evidence="1">AdSS</shortName>
        <ecNumber evidence="1">6.3.4.4</ecNumber>
    </recommendedName>
    <alternativeName>
        <fullName evidence="1">IMP--aspartate ligase</fullName>
    </alternativeName>
</protein>
<proteinExistence type="inferred from homology"/>
<gene>
    <name evidence="1" type="primary">purA</name>
    <name type="ordered locus">SSP0017</name>
</gene>
<name>PURA_STAS1</name>
<feature type="chain" id="PRO_0000224323" description="Adenylosuccinate synthetase">
    <location>
        <begin position="1"/>
        <end position="427"/>
    </location>
</feature>
<feature type="active site" description="Proton acceptor" evidence="1">
    <location>
        <position position="13"/>
    </location>
</feature>
<feature type="active site" description="Proton donor" evidence="1">
    <location>
        <position position="41"/>
    </location>
</feature>
<feature type="binding site" evidence="1">
    <location>
        <begin position="12"/>
        <end position="18"/>
    </location>
    <ligand>
        <name>GTP</name>
        <dbReference type="ChEBI" id="CHEBI:37565"/>
    </ligand>
</feature>
<feature type="binding site" description="in other chain" evidence="1">
    <location>
        <begin position="13"/>
        <end position="16"/>
    </location>
    <ligand>
        <name>IMP</name>
        <dbReference type="ChEBI" id="CHEBI:58053"/>
        <note>ligand shared between dimeric partners</note>
    </ligand>
</feature>
<feature type="binding site" evidence="1">
    <location>
        <position position="13"/>
    </location>
    <ligand>
        <name>Mg(2+)</name>
        <dbReference type="ChEBI" id="CHEBI:18420"/>
    </ligand>
</feature>
<feature type="binding site" description="in other chain" evidence="1">
    <location>
        <begin position="38"/>
        <end position="41"/>
    </location>
    <ligand>
        <name>IMP</name>
        <dbReference type="ChEBI" id="CHEBI:58053"/>
        <note>ligand shared between dimeric partners</note>
    </ligand>
</feature>
<feature type="binding site" evidence="1">
    <location>
        <begin position="40"/>
        <end position="42"/>
    </location>
    <ligand>
        <name>GTP</name>
        <dbReference type="ChEBI" id="CHEBI:37565"/>
    </ligand>
</feature>
<feature type="binding site" evidence="1">
    <location>
        <position position="40"/>
    </location>
    <ligand>
        <name>Mg(2+)</name>
        <dbReference type="ChEBI" id="CHEBI:18420"/>
    </ligand>
</feature>
<feature type="binding site" description="in other chain" evidence="1">
    <location>
        <position position="128"/>
    </location>
    <ligand>
        <name>IMP</name>
        <dbReference type="ChEBI" id="CHEBI:58053"/>
        <note>ligand shared between dimeric partners</note>
    </ligand>
</feature>
<feature type="binding site" evidence="1">
    <location>
        <position position="142"/>
    </location>
    <ligand>
        <name>IMP</name>
        <dbReference type="ChEBI" id="CHEBI:58053"/>
        <note>ligand shared between dimeric partners</note>
    </ligand>
</feature>
<feature type="binding site" description="in other chain" evidence="1">
    <location>
        <position position="223"/>
    </location>
    <ligand>
        <name>IMP</name>
        <dbReference type="ChEBI" id="CHEBI:58053"/>
        <note>ligand shared between dimeric partners</note>
    </ligand>
</feature>
<feature type="binding site" description="in other chain" evidence="1">
    <location>
        <position position="238"/>
    </location>
    <ligand>
        <name>IMP</name>
        <dbReference type="ChEBI" id="CHEBI:58053"/>
        <note>ligand shared between dimeric partners</note>
    </ligand>
</feature>
<feature type="binding site" evidence="1">
    <location>
        <begin position="298"/>
        <end position="304"/>
    </location>
    <ligand>
        <name>substrate</name>
    </ligand>
</feature>
<feature type="binding site" description="in other chain" evidence="1">
    <location>
        <position position="302"/>
    </location>
    <ligand>
        <name>IMP</name>
        <dbReference type="ChEBI" id="CHEBI:58053"/>
        <note>ligand shared between dimeric partners</note>
    </ligand>
</feature>
<feature type="binding site" evidence="1">
    <location>
        <position position="304"/>
    </location>
    <ligand>
        <name>GTP</name>
        <dbReference type="ChEBI" id="CHEBI:37565"/>
    </ligand>
</feature>
<feature type="binding site" evidence="1">
    <location>
        <begin position="330"/>
        <end position="332"/>
    </location>
    <ligand>
        <name>GTP</name>
        <dbReference type="ChEBI" id="CHEBI:37565"/>
    </ligand>
</feature>
<feature type="binding site" evidence="1">
    <location>
        <begin position="412"/>
        <end position="414"/>
    </location>
    <ligand>
        <name>GTP</name>
        <dbReference type="ChEBI" id="CHEBI:37565"/>
    </ligand>
</feature>